<gene>
    <name evidence="1" type="primary">pyrC</name>
    <name type="ordered locus">WRi_002190</name>
</gene>
<accession>C0R5K8</accession>
<sequence length="441" mass="48318">MTQTWNLLQTGQKEGYKIAYTNARIIDPETKLDIKGSLLTEGDKIVDFGESLFSTSGVDETIDCKGLVLMPGLIDIHVHFREPGQEHKETIYTGSKSAAAGGVTTVVCQPNTIPAIDSVVLAKYLKYRALETSHVNVEFYAKITTLEEKLTEMALLKEAGAVGFTDDGMPVMNPMIMRQALLYSSMLGVPIAQHAEDLNLSAGGAINEGKISEELGVKGILSASESVMVNRDILLMKDMENVHYHILHVSSKDSLDAIKRAKDLGLNVTCEVTPHHFTLTEDIVKQHGAIAKMNPPLRTEEDRLAMVEGLKTGVIDCIATDHAPHDRSSKDLPLENAAFGIVGLETMLPLSLELYHSGQMGLLDVLAKLTYKPADIIHIPRGRIQKNLAADLILVDLNHEWEIKTDNFASKSKNSPFDGRKVKGHVVRTVVSGKTIYSQKS</sequence>
<organism>
    <name type="scientific">Wolbachia sp. subsp. Drosophila simulans (strain wRi)</name>
    <dbReference type="NCBI Taxonomy" id="66084"/>
    <lineage>
        <taxon>Bacteria</taxon>
        <taxon>Pseudomonadati</taxon>
        <taxon>Pseudomonadota</taxon>
        <taxon>Alphaproteobacteria</taxon>
        <taxon>Rickettsiales</taxon>
        <taxon>Anaplasmataceae</taxon>
        <taxon>Wolbachieae</taxon>
        <taxon>Wolbachia</taxon>
    </lineage>
</organism>
<protein>
    <recommendedName>
        <fullName evidence="1">Dihydroorotase</fullName>
        <shortName evidence="1">DHOase</shortName>
        <ecNumber evidence="1">3.5.2.3</ecNumber>
    </recommendedName>
</protein>
<evidence type="ECO:0000255" key="1">
    <source>
        <dbReference type="HAMAP-Rule" id="MF_00220"/>
    </source>
</evidence>
<name>PYRC_WOLWR</name>
<proteinExistence type="inferred from homology"/>
<dbReference type="EC" id="3.5.2.3" evidence="1"/>
<dbReference type="EMBL" id="CP001391">
    <property type="protein sequence ID" value="ACN95050.1"/>
    <property type="molecule type" value="Genomic_DNA"/>
</dbReference>
<dbReference type="RefSeq" id="WP_012673093.1">
    <property type="nucleotide sequence ID" value="NZ_MKIF01000139.1"/>
</dbReference>
<dbReference type="SMR" id="C0R5K8"/>
<dbReference type="STRING" id="66084.WRi_002190"/>
<dbReference type="KEGG" id="wri:WRi_002190"/>
<dbReference type="HOGENOM" id="CLU_015572_1_0_5"/>
<dbReference type="UniPathway" id="UPA00070">
    <property type="reaction ID" value="UER00117"/>
</dbReference>
<dbReference type="Proteomes" id="UP000001293">
    <property type="component" value="Chromosome"/>
</dbReference>
<dbReference type="GO" id="GO:0005737">
    <property type="term" value="C:cytoplasm"/>
    <property type="evidence" value="ECO:0007669"/>
    <property type="project" value="TreeGrafter"/>
</dbReference>
<dbReference type="GO" id="GO:0004038">
    <property type="term" value="F:allantoinase activity"/>
    <property type="evidence" value="ECO:0007669"/>
    <property type="project" value="TreeGrafter"/>
</dbReference>
<dbReference type="GO" id="GO:0004151">
    <property type="term" value="F:dihydroorotase activity"/>
    <property type="evidence" value="ECO:0007669"/>
    <property type="project" value="UniProtKB-UniRule"/>
</dbReference>
<dbReference type="GO" id="GO:0008270">
    <property type="term" value="F:zinc ion binding"/>
    <property type="evidence" value="ECO:0007669"/>
    <property type="project" value="UniProtKB-UniRule"/>
</dbReference>
<dbReference type="GO" id="GO:0044205">
    <property type="term" value="P:'de novo' UMP biosynthetic process"/>
    <property type="evidence" value="ECO:0007669"/>
    <property type="project" value="UniProtKB-UniRule"/>
</dbReference>
<dbReference type="GO" id="GO:0006145">
    <property type="term" value="P:purine nucleobase catabolic process"/>
    <property type="evidence" value="ECO:0007669"/>
    <property type="project" value="TreeGrafter"/>
</dbReference>
<dbReference type="CDD" id="cd01317">
    <property type="entry name" value="DHOase_IIa"/>
    <property type="match status" value="1"/>
</dbReference>
<dbReference type="Gene3D" id="3.20.20.140">
    <property type="entry name" value="Metal-dependent hydrolases"/>
    <property type="match status" value="1"/>
</dbReference>
<dbReference type="Gene3D" id="2.30.40.10">
    <property type="entry name" value="Urease, subunit C, domain 1"/>
    <property type="match status" value="1"/>
</dbReference>
<dbReference type="HAMAP" id="MF_00220_B">
    <property type="entry name" value="PyrC_classI_B"/>
    <property type="match status" value="1"/>
</dbReference>
<dbReference type="InterPro" id="IPR006680">
    <property type="entry name" value="Amidohydro-rel"/>
</dbReference>
<dbReference type="InterPro" id="IPR004722">
    <property type="entry name" value="DHOase"/>
</dbReference>
<dbReference type="InterPro" id="IPR050138">
    <property type="entry name" value="DHOase/Allantoinase_Hydrolase"/>
</dbReference>
<dbReference type="InterPro" id="IPR002195">
    <property type="entry name" value="Dihydroorotase_CS"/>
</dbReference>
<dbReference type="InterPro" id="IPR011059">
    <property type="entry name" value="Metal-dep_hydrolase_composite"/>
</dbReference>
<dbReference type="InterPro" id="IPR032466">
    <property type="entry name" value="Metal_Hydrolase"/>
</dbReference>
<dbReference type="NCBIfam" id="TIGR00857">
    <property type="entry name" value="pyrC_multi"/>
    <property type="match status" value="1"/>
</dbReference>
<dbReference type="PANTHER" id="PTHR43668">
    <property type="entry name" value="ALLANTOINASE"/>
    <property type="match status" value="1"/>
</dbReference>
<dbReference type="PANTHER" id="PTHR43668:SF2">
    <property type="entry name" value="ALLANTOINASE"/>
    <property type="match status" value="1"/>
</dbReference>
<dbReference type="Pfam" id="PF01979">
    <property type="entry name" value="Amidohydro_1"/>
    <property type="match status" value="1"/>
</dbReference>
<dbReference type="SUPFAM" id="SSF51338">
    <property type="entry name" value="Composite domain of metallo-dependent hydrolases"/>
    <property type="match status" value="1"/>
</dbReference>
<dbReference type="SUPFAM" id="SSF51556">
    <property type="entry name" value="Metallo-dependent hydrolases"/>
    <property type="match status" value="1"/>
</dbReference>
<dbReference type="PROSITE" id="PS00482">
    <property type="entry name" value="DIHYDROOROTASE_1"/>
    <property type="match status" value="1"/>
</dbReference>
<dbReference type="PROSITE" id="PS00483">
    <property type="entry name" value="DIHYDROOROTASE_2"/>
    <property type="match status" value="1"/>
</dbReference>
<reference key="1">
    <citation type="journal article" date="2009" name="Proc. Natl. Acad. Sci. U.S.A.">
        <title>The mosaic genome structure of the Wolbachia wRi strain infecting Drosophila simulans.</title>
        <authorList>
            <person name="Klasson L."/>
            <person name="Westberg J."/>
            <person name="Sapountzis P."/>
            <person name="Naeslund K."/>
            <person name="Lutnaes Y."/>
            <person name="Darby A.C."/>
            <person name="Veneti Z."/>
            <person name="Chen L."/>
            <person name="Braig H.R."/>
            <person name="Garrett R."/>
            <person name="Bourtzis K."/>
            <person name="Andersson S.G."/>
        </authorList>
    </citation>
    <scope>NUCLEOTIDE SEQUENCE [LARGE SCALE GENOMIC DNA]</scope>
    <source>
        <strain>wRi</strain>
    </source>
</reference>
<keyword id="KW-0378">Hydrolase</keyword>
<keyword id="KW-0479">Metal-binding</keyword>
<keyword id="KW-0665">Pyrimidine biosynthesis</keyword>
<keyword id="KW-0862">Zinc</keyword>
<feature type="chain" id="PRO_1000193102" description="Dihydroorotase">
    <location>
        <begin position="1"/>
        <end position="441"/>
    </location>
</feature>
<feature type="active site" evidence="1">
    <location>
        <position position="321"/>
    </location>
</feature>
<feature type="binding site" evidence="1">
    <location>
        <position position="77"/>
    </location>
    <ligand>
        <name>Zn(2+)</name>
        <dbReference type="ChEBI" id="CHEBI:29105"/>
        <label>1</label>
    </ligand>
</feature>
<feature type="binding site" evidence="1">
    <location>
        <begin position="79"/>
        <end position="81"/>
    </location>
    <ligand>
        <name>substrate</name>
    </ligand>
</feature>
<feature type="binding site" evidence="1">
    <location>
        <position position="79"/>
    </location>
    <ligand>
        <name>Zn(2+)</name>
        <dbReference type="ChEBI" id="CHEBI:29105"/>
        <label>1</label>
    </ligand>
</feature>
<feature type="binding site" evidence="1">
    <location>
        <position position="111"/>
    </location>
    <ligand>
        <name>substrate</name>
    </ligand>
</feature>
<feature type="binding site" evidence="1">
    <location>
        <position position="167"/>
    </location>
    <ligand>
        <name>Zn(2+)</name>
        <dbReference type="ChEBI" id="CHEBI:29105"/>
        <label>1</label>
    </ligand>
</feature>
<feature type="binding site" evidence="1">
    <location>
        <position position="167"/>
    </location>
    <ligand>
        <name>Zn(2+)</name>
        <dbReference type="ChEBI" id="CHEBI:29105"/>
        <label>2</label>
    </ligand>
</feature>
<feature type="binding site" evidence="1">
    <location>
        <position position="194"/>
    </location>
    <ligand>
        <name>Zn(2+)</name>
        <dbReference type="ChEBI" id="CHEBI:29105"/>
        <label>2</label>
    </ligand>
</feature>
<feature type="binding site" evidence="1">
    <location>
        <position position="248"/>
    </location>
    <ligand>
        <name>Zn(2+)</name>
        <dbReference type="ChEBI" id="CHEBI:29105"/>
        <label>2</label>
    </ligand>
</feature>
<feature type="binding site" evidence="1">
    <location>
        <position position="294"/>
    </location>
    <ligand>
        <name>substrate</name>
    </ligand>
</feature>
<feature type="binding site" evidence="1">
    <location>
        <position position="321"/>
    </location>
    <ligand>
        <name>Zn(2+)</name>
        <dbReference type="ChEBI" id="CHEBI:29105"/>
        <label>1</label>
    </ligand>
</feature>
<feature type="binding site" evidence="1">
    <location>
        <position position="325"/>
    </location>
    <ligand>
        <name>substrate</name>
    </ligand>
</feature>
<feature type="binding site" evidence="1">
    <location>
        <begin position="339"/>
        <end position="340"/>
    </location>
    <ligand>
        <name>substrate</name>
    </ligand>
</feature>
<comment type="function">
    <text evidence="1">Catalyzes the reversible cyclization of carbamoyl aspartate to dihydroorotate.</text>
</comment>
<comment type="catalytic activity">
    <reaction evidence="1">
        <text>(S)-dihydroorotate + H2O = N-carbamoyl-L-aspartate + H(+)</text>
        <dbReference type="Rhea" id="RHEA:24296"/>
        <dbReference type="ChEBI" id="CHEBI:15377"/>
        <dbReference type="ChEBI" id="CHEBI:15378"/>
        <dbReference type="ChEBI" id="CHEBI:30864"/>
        <dbReference type="ChEBI" id="CHEBI:32814"/>
        <dbReference type="EC" id="3.5.2.3"/>
    </reaction>
</comment>
<comment type="cofactor">
    <cofactor evidence="1">
        <name>Zn(2+)</name>
        <dbReference type="ChEBI" id="CHEBI:29105"/>
    </cofactor>
    <text evidence="1">Binds 2 Zn(2+) ions per subunit.</text>
</comment>
<comment type="pathway">
    <text evidence="1">Pyrimidine metabolism; UMP biosynthesis via de novo pathway; (S)-dihydroorotate from bicarbonate: step 3/3.</text>
</comment>
<comment type="similarity">
    <text evidence="1">Belongs to the metallo-dependent hydrolases superfamily. DHOase family. Class I DHOase subfamily.</text>
</comment>